<dbReference type="EC" id="2.7.1.95"/>
<dbReference type="EMBL" id="V00359">
    <property type="protein sequence ID" value="CAA23656.1"/>
    <property type="molecule type" value="Genomic_DNA"/>
</dbReference>
<dbReference type="EMBL" id="Y00452">
    <property type="protein sequence ID" value="CAA68507.1"/>
    <property type="molecule type" value="Genomic_DNA"/>
</dbReference>
<dbReference type="EMBL" id="M65202">
    <property type="protein sequence ID" value="AAA72095.1"/>
    <property type="molecule type" value="Unassigned_DNA"/>
</dbReference>
<dbReference type="EMBL" id="AF498082">
    <property type="protein sequence ID" value="AAN59785.1"/>
    <property type="molecule type" value="Genomic_DNA"/>
</dbReference>
<dbReference type="EMBL" id="S54065">
    <property type="protein sequence ID" value="AAD13871.1"/>
    <property type="molecule type" value="Genomic_DNA"/>
</dbReference>
<dbReference type="EMBL" id="V00621">
    <property type="protein sequence ID" value="CAA23898.1"/>
    <property type="molecule type" value="Genomic_DNA"/>
</dbReference>
<dbReference type="EMBL" id="AH000949">
    <property type="protein sequence ID" value="AAA27445.1"/>
    <property type="molecule type" value="Genomic_DNA"/>
</dbReference>
<dbReference type="EMBL" id="AH000949">
    <property type="protein sequence ID" value="AAA27446.1"/>
    <property type="molecule type" value="Genomic_DNA"/>
</dbReference>
<dbReference type="EMBL" id="V00293">
    <property type="protein sequence ID" value="CAA23568.1"/>
    <property type="molecule type" value="Genomic_DNA"/>
</dbReference>
<dbReference type="PIR" id="A00662">
    <property type="entry name" value="PKECT9"/>
</dbReference>
<dbReference type="RefSeq" id="WP_000018322.1">
    <property type="nucleotide sequence ID" value="NZ_WVVH01000102.1"/>
</dbReference>
<dbReference type="RefSeq" id="WP_063841683.1">
    <property type="nucleotide sequence ID" value="NG_047429.1"/>
</dbReference>
<dbReference type="RefSeq" id="WP_063842148.1">
    <property type="nucleotide sequence ID" value="NG_047437.1"/>
</dbReference>
<dbReference type="RefSeq" id="YP_001687822.1">
    <property type="nucleotide sequence ID" value="NC_004429.1"/>
</dbReference>
<dbReference type="RefSeq" id="YP_002891173.1">
    <property type="nucleotide sequence ID" value="NC_012690.1"/>
</dbReference>
<dbReference type="RefSeq" id="YP_002995708.1">
    <property type="nucleotide sequence ID" value="NC_012886.1"/>
</dbReference>
<dbReference type="RefSeq" id="YP_008864028.1">
    <property type="nucleotide sequence ID" value="NC_022992.1"/>
</dbReference>
<dbReference type="RefSeq" id="YP_008864695.1">
    <property type="nucleotide sequence ID" value="NC_022996.1"/>
</dbReference>
<dbReference type="RefSeq" id="YP_008995202.1">
    <property type="nucleotide sequence ID" value="NC_023277.2"/>
</dbReference>
<dbReference type="RefSeq" id="YP_008997405.1">
    <property type="nucleotide sequence ID" value="NC_023289.2"/>
</dbReference>
<dbReference type="SMR" id="P00551"/>
<dbReference type="IntAct" id="P00551">
    <property type="interactions" value="2"/>
</dbReference>
<dbReference type="MINT" id="P00551"/>
<dbReference type="ChEMBL" id="CHEMBL3751655"/>
<dbReference type="DrugBank" id="DB01172">
    <property type="generic name" value="Kanamycin"/>
</dbReference>
<dbReference type="KEGG" id="ag:CAA23656"/>
<dbReference type="GO" id="GO:0005524">
    <property type="term" value="F:ATP binding"/>
    <property type="evidence" value="ECO:0007669"/>
    <property type="project" value="UniProtKB-KW"/>
</dbReference>
<dbReference type="GO" id="GO:0008910">
    <property type="term" value="F:kanamycin kinase activity"/>
    <property type="evidence" value="ECO:0007669"/>
    <property type="project" value="UniProtKB-EC"/>
</dbReference>
<dbReference type="GO" id="GO:0046677">
    <property type="term" value="P:response to antibiotic"/>
    <property type="evidence" value="ECO:0007669"/>
    <property type="project" value="UniProtKB-KW"/>
</dbReference>
<dbReference type="CDD" id="cd05150">
    <property type="entry name" value="APH"/>
    <property type="match status" value="1"/>
</dbReference>
<dbReference type="Gene3D" id="3.90.1200.10">
    <property type="match status" value="1"/>
</dbReference>
<dbReference type="Gene3D" id="3.30.200.20">
    <property type="entry name" value="Phosphorylase Kinase, domain 1"/>
    <property type="match status" value="1"/>
</dbReference>
<dbReference type="InterPro" id="IPR051678">
    <property type="entry name" value="AGP_Transferase"/>
</dbReference>
<dbReference type="InterPro" id="IPR002575">
    <property type="entry name" value="Aminoglycoside_PTrfase"/>
</dbReference>
<dbReference type="InterPro" id="IPR024165">
    <property type="entry name" value="Kan/Strep_kinase"/>
</dbReference>
<dbReference type="InterPro" id="IPR011009">
    <property type="entry name" value="Kinase-like_dom_sf"/>
</dbReference>
<dbReference type="NCBIfam" id="NF033068">
    <property type="entry name" value="APH_3p"/>
    <property type="match status" value="1"/>
</dbReference>
<dbReference type="NCBIfam" id="NF033059">
    <property type="entry name" value="APH_3p_I"/>
    <property type="match status" value="1"/>
</dbReference>
<dbReference type="PANTHER" id="PTHR21310:SF41">
    <property type="entry name" value="3'-PHOSPHOTRANSFERASE, PUTATIVE-RELATED"/>
    <property type="match status" value="1"/>
</dbReference>
<dbReference type="PANTHER" id="PTHR21310">
    <property type="entry name" value="AMINOGLYCOSIDE PHOSPHOTRANSFERASE-RELATED-RELATED"/>
    <property type="match status" value="1"/>
</dbReference>
<dbReference type="Pfam" id="PF01636">
    <property type="entry name" value="APH"/>
    <property type="match status" value="1"/>
</dbReference>
<dbReference type="PIRSF" id="PIRSF000706">
    <property type="entry name" value="Kanamycin_kin"/>
    <property type="match status" value="1"/>
</dbReference>
<dbReference type="SUPFAM" id="SSF56112">
    <property type="entry name" value="Protein kinase-like (PK-like)"/>
    <property type="match status" value="1"/>
</dbReference>
<gene>
    <name type="primary">aphA1</name>
    <name type="synonym">nptI</name>
</gene>
<evidence type="ECO:0000250" key="1"/>
<evidence type="ECO:0000305" key="2"/>
<organism>
    <name type="scientific">Escherichia coli</name>
    <dbReference type="NCBI Taxonomy" id="562"/>
    <lineage>
        <taxon>Bacteria</taxon>
        <taxon>Pseudomonadati</taxon>
        <taxon>Pseudomonadota</taxon>
        <taxon>Gammaproteobacteria</taxon>
        <taxon>Enterobacterales</taxon>
        <taxon>Enterobacteriaceae</taxon>
        <taxon>Escherichia</taxon>
    </lineage>
</organism>
<proteinExistence type="inferred from homology"/>
<comment type="function">
    <text>Resistance to kanamycin and structurally-related aminoglycosides, including amikacin.</text>
</comment>
<comment type="catalytic activity">
    <reaction>
        <text>kanamycin A + ATP = kanamycin 3'-phosphate + ADP + H(+)</text>
        <dbReference type="Rhea" id="RHEA:24256"/>
        <dbReference type="ChEBI" id="CHEBI:15378"/>
        <dbReference type="ChEBI" id="CHEBI:30616"/>
        <dbReference type="ChEBI" id="CHEBI:57909"/>
        <dbReference type="ChEBI" id="CHEBI:58214"/>
        <dbReference type="ChEBI" id="CHEBI:456216"/>
        <dbReference type="EC" id="2.7.1.95"/>
    </reaction>
</comment>
<comment type="miscellaneous">
    <text>This enzyme is encoded by the kanamycin resistance transposon Tn903.</text>
</comment>
<comment type="similarity">
    <text evidence="2">Belongs to the aminoglycoside phosphotransferase family.</text>
</comment>
<comment type="caution">
    <text evidence="2">PubMed:2823223 strain is not known and has been termed 'X' in this entry.</text>
</comment>
<comment type="caution">
    <text evidence="2">Was originally (Ref.4) termed APH(3')IIa whereas it is APH(3')Ia.</text>
</comment>
<sequence>MSHIQRETSCSRPRLNSNLDADLYGYKWARDNVGQSGATIYRLYGKPDAPELFLKHGKGSVANDVTDEMVRLNWLTEFMPLPTIKHFIRTPDDAWLLTTAIPGKTAFQVLEEYPDSGENIVDALAVFLRRLHSIPVCNCPFNSDRVFRLAQAQSRMNNGLVDASDFDDERNGWPVEQVWKEMHKLLPFSPDSVVTHGDFSLDNLIFDEGKLIGCIDVGRVGIADRYQDLAILWNCLGEFSPSLQKRLFQKYGIDNPDMNKLQFHLMLDEFF</sequence>
<keyword id="KW-0046">Antibiotic resistance</keyword>
<keyword id="KW-0067">ATP-binding</keyword>
<keyword id="KW-0418">Kinase</keyword>
<keyword id="KW-0547">Nucleotide-binding</keyword>
<keyword id="KW-0614">Plasmid</keyword>
<keyword id="KW-0808">Transferase</keyword>
<keyword id="KW-0814">Transposable element</keyword>
<feature type="chain" id="PRO_0000204802" description="Aminoglycoside 3'-phosphotransferase">
    <location>
        <begin position="1"/>
        <end position="271"/>
    </location>
</feature>
<feature type="active site" description="Proton acceptor" evidence="1">
    <location>
        <position position="198"/>
    </location>
</feature>
<feature type="sequence variant" description="In plasmid Rts1 and strain X.">
    <original>K</original>
    <variation>R</variation>
    <location>
        <position position="27"/>
    </location>
</feature>
<feature type="sequence variant" description="In plasmid Rts1 and strain X.">
    <original>E</original>
    <variation>A</variation>
    <location>
        <position position="77"/>
    </location>
</feature>
<feature type="sequence variant" description="In plasmid Rts1.">
    <original>V</original>
    <variation>A</variation>
    <location>
        <position position="126"/>
    </location>
</feature>
<feature type="sequence variant" description="In plasmid Rts1.">
    <original>A</original>
    <variation>T</variation>
    <location>
        <position position="150"/>
    </location>
</feature>
<feature type="sequence variant" description="In plasmid Rts1.">
    <original>L</original>
    <variation>F</variation>
    <location>
        <position position="247"/>
    </location>
</feature>
<feature type="sequence variant" description="In plasmid Rts1.">
    <original>Q</original>
    <variation>Y</variation>
    <location>
        <position position="249"/>
    </location>
</feature>
<feature type="sequence conflict" description="In Ref. 1 and 4." evidence="2" ref="1 4">
    <original>L</original>
    <variation>M</variation>
    <location>
        <position position="19"/>
    </location>
</feature>
<feature type="sequence conflict" description="In Ref. 2; CAA68507." evidence="2" ref="2">
    <original>D</original>
    <variation>N</variation>
    <location>
        <position position="48"/>
    </location>
</feature>
<feature type="sequence conflict" description="In Ref. 2; CAA68507." evidence="2" ref="2">
    <original>I</original>
    <variation>N</variation>
    <location>
        <position position="120"/>
    </location>
</feature>
<accession>P00551</accession>
<accession>Q53299</accession>
<accession>Q8GNQ0</accession>
<geneLocation type="plasmid">
    <name>Rts1</name>
</geneLocation>
<geneLocation type="plasmid">
    <name>pIP1518</name>
</geneLocation>
<reference key="1">
    <citation type="journal article" date="1981" name="J. Mol. Biol.">
        <title>Nucleotide sequence of the kanamycin resistance transposon Tn903.</title>
        <authorList>
            <person name="Oka A."/>
            <person name="Sugisaki H."/>
            <person name="Takanami M."/>
        </authorList>
    </citation>
    <scope>NUCLEOTIDE SEQUENCE [GENOMIC DNA]</scope>
    <source>
        <transposon>Tn903</transposon>
    </source>
</reference>
<reference key="2">
    <citation type="journal article" date="1987" name="Nucleic Acids Res.">
        <title>The nucleotide sequence of an aminoglycoside 3'-phosphotransferase gene from E. coli.</title>
        <authorList>
            <person name="Vakulenko S."/>
            <person name="Kalman M."/>
            <person name="Horvath B."/>
            <person name="Simoncsits A."/>
        </authorList>
    </citation>
    <scope>NUCLEOTIDE SEQUENCE [GENOMIC DNA]</scope>
    <source>
        <strain>X</strain>
    </source>
</reference>
<reference key="3">
    <citation type="journal article" date="1991" name="J. Bacteriol.">
        <title>Three short fragments of Rts1 DNA are responsible for the temperature-sensitive growth phenotype (Tsg) of host bacteria.</title>
        <authorList>
            <person name="Mochida S."/>
            <person name="Tsuchiya H."/>
            <person name="Mori K."/>
            <person name="Kaji A."/>
        </authorList>
    </citation>
    <scope>NUCLEOTIDE SEQUENCE [GENOMIC DNA]</scope>
    <source>
        <plasmid>Rts1</plasmid>
    </source>
</reference>
<reference key="4">
    <citation type="submission" date="2002-03" db="EMBL/GenBank/DDBJ databases">
        <authorList>
            <person name="Press C.M."/>
            <person name="Mahaffee W.F."/>
            <person name="Roche M.M."/>
        </authorList>
    </citation>
    <scope>NUCLEOTIDE SEQUENCE [GENOMIC DNA]</scope>
</reference>
<reference key="5">
    <citation type="journal article" date="1993" name="Antimicrob. Agents Chemother.">
        <title>Overproduction of 3'-aminoglycoside phosphotransferase type I confers resistance to tobramycin in Escherichia coli.</title>
        <authorList>
            <person name="Menard R."/>
            <person name="Molinas C."/>
            <person name="Arthur M."/>
            <person name="Duval J."/>
            <person name="Courvalin P."/>
            <person name="Leclercq R."/>
        </authorList>
    </citation>
    <scope>NUCLEOTIDE SEQUENCE [GENOMIC DNA] OF 1-42</scope>
    <source>
        <strain>HM69</strain>
        <plasmid>pIP1518</plasmid>
    </source>
</reference>
<reference key="6">
    <citation type="journal article" date="1980" name="Proc. Natl. Acad. Sci. U.S.A.">
        <title>Genetic and DNA sequence analysis of the kanamycin resistance transposon Tn903.</title>
        <authorList>
            <person name="Grindley N.D.F."/>
            <person name="Joyce C.M."/>
        </authorList>
    </citation>
    <scope>NUCLEOTIDE SEQUENCE [GENOMIC DNA] OF 1-11</scope>
    <source>
        <transposon>Tn903</transposon>
    </source>
</reference>
<reference key="7">
    <citation type="journal article" date="1981" name="Cold Spring Harb. Symp. Quant. Biol.">
        <title>Analysis of the structure and function of the kanamycin-resistance transposon Tn903.</title>
        <authorList>
            <person name="Grindley N.D.F."/>
            <person name="Joyce C.M."/>
        </authorList>
    </citation>
    <scope>NUCLEOTIDE SEQUENCE [GENOMIC DNA] OF 1-11 AND 184-271</scope>
    <source>
        <transposon>Tn903</transposon>
    </source>
</reference>
<reference key="8">
    <citation type="journal article" date="1981" name="Nucleic Acids Res.">
        <title>Construction and characterization of recombinant plasmid DNAs containing sequences of the origin of bacteriophage phi X174 DNA replication.</title>
        <authorList>
            <person name="Heidekamp F."/>
            <person name="Baas P.D."/>
            <person name="van Boom J.H."/>
            <person name="Veeneman G.H."/>
            <person name="Zipursky S.L."/>
            <person name="Jansz H.S."/>
        </authorList>
    </citation>
    <scope>NUCLEOTIDE SEQUENCE [GENOMIC DNA] OF 31-145</scope>
</reference>
<protein>
    <recommendedName>
        <fullName>Aminoglycoside 3'-phosphotransferase</fullName>
        <ecNumber>2.7.1.95</ecNumber>
    </recommendedName>
    <alternativeName>
        <fullName>APH(3')-I</fullName>
        <shortName>APH(3')I</shortName>
    </alternativeName>
    <alternativeName>
        <fullName>Kanamycin kinase, type I</fullName>
    </alternativeName>
    <alternativeName>
        <fullName>Neomycin-kanamycin phosphotransferase type I</fullName>
    </alternativeName>
</protein>
<name>KKA1_ECOLX</name>